<keyword id="KW-0106">Calcium</keyword>
<keyword id="KW-0903">Direct protein sequencing</keyword>
<keyword id="KW-0378">Hydrolase</keyword>
<keyword id="KW-0479">Metal-binding</keyword>
<keyword id="KW-0482">Metalloprotease</keyword>
<keyword id="KW-0645">Protease</keyword>
<keyword id="KW-0964">Secreted</keyword>
<keyword id="KW-0732">Signal</keyword>
<keyword id="KW-0862">Zinc</keyword>
<keyword id="KW-0865">Zymogen</keyword>
<feature type="signal peptide" evidence="2">
    <location>
        <begin position="1"/>
        <end position="24"/>
    </location>
</feature>
<feature type="propeptide" id="PRO_0000028630" evidence="2">
    <location>
        <begin position="25"/>
        <end position="196"/>
    </location>
</feature>
<feature type="chain" id="PRO_0000028631" description="Neutral protease">
    <location>
        <begin position="197"/>
        <end position="609"/>
    </location>
</feature>
<feature type="active site" evidence="3">
    <location>
        <position position="344"/>
    </location>
</feature>
<feature type="active site" description="Proton donor" evidence="3">
    <location>
        <position position="426"/>
    </location>
</feature>
<feature type="binding site" evidence="3">
    <location>
        <position position="343"/>
    </location>
    <ligand>
        <name>Zn(2+)</name>
        <dbReference type="ChEBI" id="CHEBI:29105"/>
        <note>catalytic</note>
    </ligand>
</feature>
<feature type="binding site" evidence="3">
    <location>
        <position position="347"/>
    </location>
    <ligand>
        <name>Zn(2+)</name>
        <dbReference type="ChEBI" id="CHEBI:29105"/>
        <note>catalytic</note>
    </ligand>
</feature>
<feature type="binding site" evidence="3">
    <location>
        <position position="367"/>
    </location>
    <ligand>
        <name>Zn(2+)</name>
        <dbReference type="ChEBI" id="CHEBI:29105"/>
        <note>catalytic</note>
    </ligand>
</feature>
<organism>
    <name type="scientific">Vibrio proteolyticus</name>
    <name type="common">Aeromonas proteolytica</name>
    <dbReference type="NCBI Taxonomy" id="671"/>
    <lineage>
        <taxon>Bacteria</taxon>
        <taxon>Pseudomonadati</taxon>
        <taxon>Pseudomonadota</taxon>
        <taxon>Gammaproteobacteria</taxon>
        <taxon>Vibrionales</taxon>
        <taxon>Vibrionaceae</taxon>
        <taxon>Vibrio</taxon>
    </lineage>
</organism>
<dbReference type="EC" id="3.4.24.25"/>
<dbReference type="EMBL" id="M64809">
    <property type="protein sequence ID" value="AAA27548.1"/>
    <property type="molecule type" value="Genomic_DNA"/>
</dbReference>
<dbReference type="PIR" id="JT0903">
    <property type="entry name" value="JT0903"/>
</dbReference>
<dbReference type="RefSeq" id="WP_021706341.1">
    <property type="nucleotide sequence ID" value="NZ_BAABTA010000002.1"/>
</dbReference>
<dbReference type="SMR" id="Q00971"/>
<dbReference type="MEROPS" id="M04.003"/>
<dbReference type="KEGG" id="ag:AAA27548"/>
<dbReference type="BRENDA" id="3.4.24.25">
    <property type="organism ID" value="167"/>
</dbReference>
<dbReference type="GO" id="GO:0005576">
    <property type="term" value="C:extracellular region"/>
    <property type="evidence" value="ECO:0007669"/>
    <property type="project" value="UniProtKB-SubCell"/>
</dbReference>
<dbReference type="GO" id="GO:0046872">
    <property type="term" value="F:metal ion binding"/>
    <property type="evidence" value="ECO:0007669"/>
    <property type="project" value="UniProtKB-KW"/>
</dbReference>
<dbReference type="GO" id="GO:0004222">
    <property type="term" value="F:metalloendopeptidase activity"/>
    <property type="evidence" value="ECO:0007669"/>
    <property type="project" value="InterPro"/>
</dbReference>
<dbReference type="GO" id="GO:0006508">
    <property type="term" value="P:proteolysis"/>
    <property type="evidence" value="ECO:0007669"/>
    <property type="project" value="UniProtKB-KW"/>
</dbReference>
<dbReference type="CDD" id="cd09597">
    <property type="entry name" value="M4_TLP"/>
    <property type="match status" value="1"/>
</dbReference>
<dbReference type="FunFam" id="2.60.120.380:FF:000013">
    <property type="entry name" value="Alkaline serine protease"/>
    <property type="match status" value="1"/>
</dbReference>
<dbReference type="Gene3D" id="2.60.120.380">
    <property type="match status" value="1"/>
</dbReference>
<dbReference type="Gene3D" id="3.10.170.10">
    <property type="match status" value="1"/>
</dbReference>
<dbReference type="Gene3D" id="3.10.450.40">
    <property type="match status" value="1"/>
</dbReference>
<dbReference type="Gene3D" id="3.10.450.490">
    <property type="match status" value="1"/>
</dbReference>
<dbReference type="Gene3D" id="1.10.390.10">
    <property type="entry name" value="Neutral Protease Domain 2"/>
    <property type="match status" value="1"/>
</dbReference>
<dbReference type="InterPro" id="IPR011096">
    <property type="entry name" value="FTP_domain"/>
</dbReference>
<dbReference type="InterPro" id="IPR025711">
    <property type="entry name" value="PepSY"/>
</dbReference>
<dbReference type="InterPro" id="IPR007280">
    <property type="entry name" value="Peptidase_C_arc/bac"/>
</dbReference>
<dbReference type="InterPro" id="IPR023612">
    <property type="entry name" value="Peptidase_M4"/>
</dbReference>
<dbReference type="InterPro" id="IPR027268">
    <property type="entry name" value="Peptidase_M4/M1_CTD_sf"/>
</dbReference>
<dbReference type="InterPro" id="IPR001570">
    <property type="entry name" value="Peptidase_M4_C_domain"/>
</dbReference>
<dbReference type="InterPro" id="IPR013856">
    <property type="entry name" value="Peptidase_M4_domain"/>
</dbReference>
<dbReference type="InterPro" id="IPR050728">
    <property type="entry name" value="Zinc_Metalloprotease_M4"/>
</dbReference>
<dbReference type="PANTHER" id="PTHR33794">
    <property type="entry name" value="BACILLOLYSIN"/>
    <property type="match status" value="1"/>
</dbReference>
<dbReference type="PANTHER" id="PTHR33794:SF1">
    <property type="entry name" value="BACILLOLYSIN"/>
    <property type="match status" value="1"/>
</dbReference>
<dbReference type="Pfam" id="PF07504">
    <property type="entry name" value="FTP"/>
    <property type="match status" value="1"/>
</dbReference>
<dbReference type="Pfam" id="PF03413">
    <property type="entry name" value="PepSY"/>
    <property type="match status" value="1"/>
</dbReference>
<dbReference type="Pfam" id="PF01447">
    <property type="entry name" value="Peptidase_M4"/>
    <property type="match status" value="1"/>
</dbReference>
<dbReference type="Pfam" id="PF02868">
    <property type="entry name" value="Peptidase_M4_C"/>
    <property type="match status" value="1"/>
</dbReference>
<dbReference type="Pfam" id="PF04151">
    <property type="entry name" value="PPC"/>
    <property type="match status" value="1"/>
</dbReference>
<dbReference type="PRINTS" id="PR00730">
    <property type="entry name" value="THERMOLYSIN"/>
</dbReference>
<dbReference type="SUPFAM" id="SSF89260">
    <property type="entry name" value="Collagen-binding domain"/>
    <property type="match status" value="1"/>
</dbReference>
<dbReference type="SUPFAM" id="SSF55486">
    <property type="entry name" value="Metalloproteases ('zincins'), catalytic domain"/>
    <property type="match status" value="1"/>
</dbReference>
<dbReference type="PROSITE" id="PS00142">
    <property type="entry name" value="ZINC_PROTEASE"/>
    <property type="match status" value="1"/>
</dbReference>
<protein>
    <recommendedName>
        <fullName>Neutral protease</fullName>
        <ecNumber>3.4.24.25</ecNumber>
    </recommendedName>
    <alternativeName>
        <fullName>Aeromonolysin</fullName>
    </alternativeName>
    <alternativeName>
        <fullName>Vibriolysin</fullName>
    </alternativeName>
</protein>
<proteinExistence type="evidence at protein level"/>
<comment type="function">
    <text>Extracellular zinc metalloprotease.</text>
</comment>
<comment type="catalytic activity">
    <reaction>
        <text>Preferential cleavage of bonds with bulky hydrophobic groups in P2 and P1'. Phe at P1' is the most favored residue, which distinguished this enzyme from thermolysin.</text>
        <dbReference type="EC" id="3.4.24.25"/>
    </reaction>
</comment>
<comment type="cofactor">
    <cofactor evidence="1">
        <name>Zn(2+)</name>
        <dbReference type="ChEBI" id="CHEBI:29105"/>
    </cofactor>
    <text evidence="1">Binds 1 zinc ion.</text>
</comment>
<comment type="subcellular location">
    <subcellularLocation>
        <location>Secreted</location>
    </subcellularLocation>
</comment>
<comment type="similarity">
    <text evidence="4">Belongs to the peptidase M4 family.</text>
</comment>
<sequence>MNKTQRHINWLLAVSAATALPVTAAEMINVNDGSLLNQALKAQSQSVAPVETGFKQMKRVVLPNGKVKVRYQQTHHGLPVFNTSVVATESKSGSSEVFGVMAQGIADDVSTLTPSVEMKQAISIAKSRFQQQEKMVAEPATENEKAELMVRLDDNNQAQLVYLVDFFVAEDHPARPFFFIDAQTGEVLQTWDGLNHAQADGTGPGGNTKTGRYEYGSDFPPFVIDKVGTKCSMNNSAVRTVDLNGSTSGNTTYSYTCNDSTNYNDYKAINGAYSPLNDAHYFGKVVFDMYKDWMNTTPLTFQLTMRVHYGNNYENAFWNGSSMTFGDGYSTFYPLVDINVSAHEVSHGFTEQNSGLVYENMSGGMNEAFSDIAGEAAEFYMKGSVDWVVGADIFKSSGGLRYFDQPSRDGRSIDHASDYYNGLNVHYSSGVFNRAFYLLANKAGWDVRKGFEVFTLANQLYWTANSTFDEGGCGVVKAASDMGYSVADVEDAFNTVGVNASCGATPPPSGDVLEIGKPLANLSGNRNDMTYYTFTPSSSSSVVIKITGGTGDADLYVKAGSKPTTTSYDCRPYKYGNEEQCSISAQAGTTYHVMLRGYSNYAGVTLRAD</sequence>
<name>NPRV_VIBPR</name>
<accession>Q00971</accession>
<evidence type="ECO:0000250" key="1"/>
<evidence type="ECO:0000255" key="2"/>
<evidence type="ECO:0000255" key="3">
    <source>
        <dbReference type="PROSITE-ProRule" id="PRU10095"/>
    </source>
</evidence>
<evidence type="ECO:0000305" key="4"/>
<reference key="1">
    <citation type="journal article" date="1992" name="Gene">
        <title>Cloning, sequencing and expression of the gene encoding the extracellular neutral protease, vibriolysin, of Vibrio proteolyticus.</title>
        <authorList>
            <person name="David V.A."/>
            <person name="Deutch A.H."/>
            <person name="Sloma A."/>
            <person name="Pawlyk D."/>
            <person name="Ally A."/>
            <person name="Durham D.R."/>
        </authorList>
    </citation>
    <scope>NUCLEOTIDE SEQUENCE [GENOMIC DNA]</scope>
    <scope>PROTEIN SEQUENCE OF 197-215</scope>
</reference>
<gene>
    <name type="primary">nprV</name>
</gene>